<gene>
    <name type="primary">EXPA9</name>
    <name type="synonym">EXP9</name>
    <name type="ordered locus">Os01g0249100</name>
    <name type="ordered locus">LOC_Os01g14660</name>
    <name type="ORF">OSJNBa0049B20.24</name>
    <name type="ORF">P0034C11.32</name>
</gene>
<reference key="1">
    <citation type="journal article" date="2002" name="Nature">
        <title>The genome sequence and structure of rice chromosome 1.</title>
        <authorList>
            <person name="Sasaki T."/>
            <person name="Matsumoto T."/>
            <person name="Yamamoto K."/>
            <person name="Sakata K."/>
            <person name="Baba T."/>
            <person name="Katayose Y."/>
            <person name="Wu J."/>
            <person name="Niimura Y."/>
            <person name="Cheng Z."/>
            <person name="Nagamura Y."/>
            <person name="Antonio B.A."/>
            <person name="Kanamori H."/>
            <person name="Hosokawa S."/>
            <person name="Masukawa M."/>
            <person name="Arikawa K."/>
            <person name="Chiden Y."/>
            <person name="Hayashi M."/>
            <person name="Okamoto M."/>
            <person name="Ando T."/>
            <person name="Aoki H."/>
            <person name="Arita K."/>
            <person name="Hamada M."/>
            <person name="Harada C."/>
            <person name="Hijishita S."/>
            <person name="Honda M."/>
            <person name="Ichikawa Y."/>
            <person name="Idonuma A."/>
            <person name="Iijima M."/>
            <person name="Ikeda M."/>
            <person name="Ikeno M."/>
            <person name="Ito S."/>
            <person name="Ito T."/>
            <person name="Ito Y."/>
            <person name="Ito Y."/>
            <person name="Iwabuchi A."/>
            <person name="Kamiya K."/>
            <person name="Karasawa W."/>
            <person name="Katagiri S."/>
            <person name="Kikuta A."/>
            <person name="Kobayashi N."/>
            <person name="Kono I."/>
            <person name="Machita K."/>
            <person name="Maehara T."/>
            <person name="Mizuno H."/>
            <person name="Mizubayashi T."/>
            <person name="Mukai Y."/>
            <person name="Nagasaki H."/>
            <person name="Nakashima M."/>
            <person name="Nakama Y."/>
            <person name="Nakamichi Y."/>
            <person name="Nakamura M."/>
            <person name="Namiki N."/>
            <person name="Negishi M."/>
            <person name="Ohta I."/>
            <person name="Ono N."/>
            <person name="Saji S."/>
            <person name="Sakai K."/>
            <person name="Shibata M."/>
            <person name="Shimokawa T."/>
            <person name="Shomura A."/>
            <person name="Song J."/>
            <person name="Takazaki Y."/>
            <person name="Terasawa K."/>
            <person name="Tsuji K."/>
            <person name="Waki K."/>
            <person name="Yamagata H."/>
            <person name="Yamane H."/>
            <person name="Yoshiki S."/>
            <person name="Yoshihara R."/>
            <person name="Yukawa K."/>
            <person name="Zhong H."/>
            <person name="Iwama H."/>
            <person name="Endo T."/>
            <person name="Ito H."/>
            <person name="Hahn J.H."/>
            <person name="Kim H.-I."/>
            <person name="Eun M.-Y."/>
            <person name="Yano M."/>
            <person name="Jiang J."/>
            <person name="Gojobori T."/>
        </authorList>
    </citation>
    <scope>NUCLEOTIDE SEQUENCE [LARGE SCALE GENOMIC DNA]</scope>
    <source>
        <strain>cv. Nipponbare</strain>
    </source>
</reference>
<reference key="2">
    <citation type="journal article" date="2005" name="Nature">
        <title>The map-based sequence of the rice genome.</title>
        <authorList>
            <consortium name="International rice genome sequencing project (IRGSP)"/>
        </authorList>
    </citation>
    <scope>NUCLEOTIDE SEQUENCE [LARGE SCALE GENOMIC DNA]</scope>
    <source>
        <strain>cv. Nipponbare</strain>
    </source>
</reference>
<reference key="3">
    <citation type="journal article" date="2008" name="Nucleic Acids Res.">
        <title>The rice annotation project database (RAP-DB): 2008 update.</title>
        <authorList>
            <consortium name="The rice annotation project (RAP)"/>
        </authorList>
    </citation>
    <scope>GENOME REANNOTATION</scope>
    <source>
        <strain>cv. Nipponbare</strain>
    </source>
</reference>
<reference key="4">
    <citation type="journal article" date="2013" name="Rice">
        <title>Improvement of the Oryza sativa Nipponbare reference genome using next generation sequence and optical map data.</title>
        <authorList>
            <person name="Kawahara Y."/>
            <person name="de la Bastide M."/>
            <person name="Hamilton J.P."/>
            <person name="Kanamori H."/>
            <person name="McCombie W.R."/>
            <person name="Ouyang S."/>
            <person name="Schwartz D.C."/>
            <person name="Tanaka T."/>
            <person name="Wu J."/>
            <person name="Zhou S."/>
            <person name="Childs K.L."/>
            <person name="Davidson R.M."/>
            <person name="Lin H."/>
            <person name="Quesada-Ocampo L."/>
            <person name="Vaillancourt B."/>
            <person name="Sakai H."/>
            <person name="Lee S.S."/>
            <person name="Kim J."/>
            <person name="Numa H."/>
            <person name="Itoh T."/>
            <person name="Buell C.R."/>
            <person name="Matsumoto T."/>
        </authorList>
    </citation>
    <scope>GENOME REANNOTATION</scope>
    <source>
        <strain>cv. Nipponbare</strain>
    </source>
</reference>
<reference key="5">
    <citation type="journal article" date="2005" name="Mol. Cells">
        <title>Characterization and transcriptional expression of the alpha-expansin gene family in rice.</title>
        <authorList>
            <person name="Shin J.-H."/>
            <person name="Jeong D.-H."/>
            <person name="Park M.C."/>
            <person name="An G."/>
        </authorList>
    </citation>
    <scope>NUCLEOTIDE SEQUENCE [MRNA] OF 5-222</scope>
    <scope>TISSUE SPECIFICITY</scope>
    <source>
        <strain>cv. Dongjin</strain>
    </source>
</reference>
<reference key="6">
    <citation type="journal article" date="2004" name="Plant Mol. Biol.">
        <title>Nomenclature for members of the expansin superfamily of genes and proteins.</title>
        <authorList>
            <person name="Kende H."/>
            <person name="Bradford K.J."/>
            <person name="Brummell D.A."/>
            <person name="Cho H.-T."/>
            <person name="Cosgrove D.J."/>
            <person name="Fleming A.J."/>
            <person name="Gehring C."/>
            <person name="Lee Y."/>
            <person name="McQueen-Mason S.J."/>
            <person name="Rose J.K.C."/>
            <person name="Voesenek L.A.C."/>
        </authorList>
    </citation>
    <scope>NOMENCLATURE</scope>
</reference>
<dbReference type="EMBL" id="AC007789">
    <property type="protein sequence ID" value="AAD38297.1"/>
    <property type="molecule type" value="Genomic_DNA"/>
</dbReference>
<dbReference type="EMBL" id="AP002865">
    <property type="protein sequence ID" value="BAB18338.1"/>
    <property type="molecule type" value="Genomic_DNA"/>
</dbReference>
<dbReference type="EMBL" id="AP008207">
    <property type="protein sequence ID" value="BAF04502.1"/>
    <property type="molecule type" value="Genomic_DNA"/>
</dbReference>
<dbReference type="EMBL" id="AP014957">
    <property type="status" value="NOT_ANNOTATED_CDS"/>
    <property type="molecule type" value="Genomic_DNA"/>
</dbReference>
<dbReference type="EMBL" id="DQ061054">
    <property type="protein sequence ID" value="AAY63545.1"/>
    <property type="molecule type" value="mRNA"/>
</dbReference>
<dbReference type="RefSeq" id="XP_015642130.1">
    <property type="nucleotide sequence ID" value="XM_015786644.1"/>
</dbReference>
<dbReference type="SMR" id="Q4PR53"/>
<dbReference type="FunCoup" id="Q4PR53">
    <property type="interactions" value="8"/>
</dbReference>
<dbReference type="STRING" id="39947.Q4PR53"/>
<dbReference type="GlyCosmos" id="Q4PR53">
    <property type="glycosylation" value="4 sites, No reported glycans"/>
</dbReference>
<dbReference type="PaxDb" id="39947-Q4PR53"/>
<dbReference type="KEGG" id="dosa:Os01g0249100"/>
<dbReference type="HOGENOM" id="CLU_027462_0_0_1"/>
<dbReference type="InParanoid" id="Q4PR53"/>
<dbReference type="OrthoDB" id="586465at2759"/>
<dbReference type="Proteomes" id="UP000000763">
    <property type="component" value="Chromosome 1"/>
</dbReference>
<dbReference type="Proteomes" id="UP000059680">
    <property type="component" value="Chromosome 1"/>
</dbReference>
<dbReference type="GO" id="GO:0005576">
    <property type="term" value="C:extracellular region"/>
    <property type="evidence" value="ECO:0007669"/>
    <property type="project" value="UniProtKB-KW"/>
</dbReference>
<dbReference type="GO" id="GO:0016020">
    <property type="term" value="C:membrane"/>
    <property type="evidence" value="ECO:0007669"/>
    <property type="project" value="UniProtKB-SubCell"/>
</dbReference>
<dbReference type="GO" id="GO:0009828">
    <property type="term" value="P:plant-type cell wall loosening"/>
    <property type="evidence" value="ECO:0000250"/>
    <property type="project" value="UniProtKB"/>
</dbReference>
<dbReference type="CDD" id="cd22274">
    <property type="entry name" value="DPBB_EXPA_N"/>
    <property type="match status" value="1"/>
</dbReference>
<dbReference type="FunFam" id="2.60.40.760:FF:000001">
    <property type="entry name" value="Expansin"/>
    <property type="match status" value="1"/>
</dbReference>
<dbReference type="Gene3D" id="2.60.40.760">
    <property type="entry name" value="Expansin, cellulose-binding-like domain"/>
    <property type="match status" value="1"/>
</dbReference>
<dbReference type="Gene3D" id="2.40.40.10">
    <property type="entry name" value="RlpA-like domain"/>
    <property type="match status" value="1"/>
</dbReference>
<dbReference type="InterPro" id="IPR007118">
    <property type="entry name" value="Expan_Lol_pI"/>
</dbReference>
<dbReference type="InterPro" id="IPR002963">
    <property type="entry name" value="Expansin"/>
</dbReference>
<dbReference type="InterPro" id="IPR007112">
    <property type="entry name" value="Expansin/allergen_DPBB_dom"/>
</dbReference>
<dbReference type="InterPro" id="IPR007117">
    <property type="entry name" value="Expansin_CBD"/>
</dbReference>
<dbReference type="InterPro" id="IPR036749">
    <property type="entry name" value="Expansin_CBD_sf"/>
</dbReference>
<dbReference type="InterPro" id="IPR009009">
    <property type="entry name" value="RlpA-like_DPBB"/>
</dbReference>
<dbReference type="InterPro" id="IPR036908">
    <property type="entry name" value="RlpA-like_sf"/>
</dbReference>
<dbReference type="PANTHER" id="PTHR31867">
    <property type="entry name" value="EXPANSIN-A15"/>
    <property type="match status" value="1"/>
</dbReference>
<dbReference type="Pfam" id="PF03330">
    <property type="entry name" value="DPBB_1"/>
    <property type="match status" value="1"/>
</dbReference>
<dbReference type="Pfam" id="PF01357">
    <property type="entry name" value="Expansin_C"/>
    <property type="match status" value="1"/>
</dbReference>
<dbReference type="PRINTS" id="PR01226">
    <property type="entry name" value="EXPANSIN"/>
</dbReference>
<dbReference type="PRINTS" id="PR01225">
    <property type="entry name" value="EXPANSNFAMLY"/>
</dbReference>
<dbReference type="SMART" id="SM00837">
    <property type="entry name" value="DPBB_1"/>
    <property type="match status" value="1"/>
</dbReference>
<dbReference type="SUPFAM" id="SSF50685">
    <property type="entry name" value="Barwin-like endoglucanases"/>
    <property type="match status" value="1"/>
</dbReference>
<dbReference type="SUPFAM" id="SSF49590">
    <property type="entry name" value="PHL pollen allergen"/>
    <property type="match status" value="1"/>
</dbReference>
<dbReference type="PROSITE" id="PS50843">
    <property type="entry name" value="EXPANSIN_CBD"/>
    <property type="match status" value="1"/>
</dbReference>
<dbReference type="PROSITE" id="PS50842">
    <property type="entry name" value="EXPANSIN_EG45"/>
    <property type="match status" value="1"/>
</dbReference>
<name>EXPA9_ORYSJ</name>
<feature type="signal peptide" evidence="2">
    <location>
        <begin position="1"/>
        <end position="21"/>
    </location>
</feature>
<feature type="chain" id="PRO_0000251988" description="Expansin-A9">
    <location>
        <begin position="22"/>
        <end position="254"/>
    </location>
</feature>
<feature type="domain" description="Expansin-like EG45" evidence="4">
    <location>
        <begin position="45"/>
        <end position="159"/>
    </location>
</feature>
<feature type="domain" description="Expansin-like CBD" evidence="3">
    <location>
        <begin position="169"/>
        <end position="248"/>
    </location>
</feature>
<feature type="glycosylation site" description="N-linked (GlcNAc...) asparagine" evidence="2">
    <location>
        <position position="61"/>
    </location>
</feature>
<feature type="glycosylation site" description="N-linked (GlcNAc...) asparagine" evidence="2">
    <location>
        <position position="94"/>
    </location>
</feature>
<feature type="glycosylation site" description="N-linked (GlcNAc...) asparagine" evidence="2">
    <location>
        <position position="109"/>
    </location>
</feature>
<feature type="glycosylation site" description="N-linked (GlcNAc...) asparagine" evidence="2">
    <location>
        <position position="251"/>
    </location>
</feature>
<feature type="disulfide bond" evidence="4">
    <location>
        <begin position="48"/>
        <end position="76"/>
    </location>
</feature>
<feature type="disulfide bond" evidence="4">
    <location>
        <begin position="79"/>
        <end position="154"/>
    </location>
</feature>
<feature type="disulfide bond" evidence="4">
    <location>
        <begin position="84"/>
        <end position="92"/>
    </location>
</feature>
<sequence>MEKKLLVVLFLSLCCASRLRGEAAQQWTSATATFYGGSDASGTMGGSCGYGNMYSAGYGTNTTALSSALYGDGASCGACYLVTCDASATRWCKNGTSVTVTATNYCPPNYSESGDAGGWCNPPRRHFDMSQPAWEAIAVYSSGIVPVRYARTPCRRVGGIRFGIAGHDYYELVLVTNVAGSGAVAAAWVKGSGTEWLSMSRNWGENWQSNAYLTGQALSFRVQADDGGVVTAYDVAPANWQFGSTYQSDVNFSY</sequence>
<organism>
    <name type="scientific">Oryza sativa subsp. japonica</name>
    <name type="common">Rice</name>
    <dbReference type="NCBI Taxonomy" id="39947"/>
    <lineage>
        <taxon>Eukaryota</taxon>
        <taxon>Viridiplantae</taxon>
        <taxon>Streptophyta</taxon>
        <taxon>Embryophyta</taxon>
        <taxon>Tracheophyta</taxon>
        <taxon>Spermatophyta</taxon>
        <taxon>Magnoliopsida</taxon>
        <taxon>Liliopsida</taxon>
        <taxon>Poales</taxon>
        <taxon>Poaceae</taxon>
        <taxon>BOP clade</taxon>
        <taxon>Oryzoideae</taxon>
        <taxon>Oryzeae</taxon>
        <taxon>Oryzinae</taxon>
        <taxon>Oryza</taxon>
        <taxon>Oryza sativa</taxon>
    </lineage>
</organism>
<evidence type="ECO:0000250" key="1"/>
<evidence type="ECO:0000255" key="2"/>
<evidence type="ECO:0000255" key="3">
    <source>
        <dbReference type="PROSITE-ProRule" id="PRU00078"/>
    </source>
</evidence>
<evidence type="ECO:0000255" key="4">
    <source>
        <dbReference type="PROSITE-ProRule" id="PRU00079"/>
    </source>
</evidence>
<evidence type="ECO:0000269" key="5">
    <source>
    </source>
</evidence>
<evidence type="ECO:0000305" key="6"/>
<proteinExistence type="evidence at transcript level"/>
<keyword id="KW-0134">Cell wall</keyword>
<keyword id="KW-0961">Cell wall biogenesis/degradation</keyword>
<keyword id="KW-1015">Disulfide bond</keyword>
<keyword id="KW-0325">Glycoprotein</keyword>
<keyword id="KW-0472">Membrane</keyword>
<keyword id="KW-1185">Reference proteome</keyword>
<keyword id="KW-0964">Secreted</keyword>
<keyword id="KW-0732">Signal</keyword>
<accession>Q4PR53</accession>
<accession>Q9XHW9</accession>
<protein>
    <recommendedName>
        <fullName>Expansin-A9</fullName>
    </recommendedName>
    <alternativeName>
        <fullName>Alpha-expansin-9</fullName>
    </alternativeName>
    <alternativeName>
        <fullName>OsEXP9</fullName>
    </alternativeName>
    <alternativeName>
        <fullName>OsEXPA9</fullName>
    </alternativeName>
    <alternativeName>
        <fullName>OsaEXPa1.19</fullName>
    </alternativeName>
</protein>
<comment type="function">
    <text evidence="1">May cause loosening and extension of plant cell walls by disrupting non-covalent bonding between cellulose microfibrils and matrix glucans. No enzymatic activity has been found. May be required for rapid internodal elongation in deepwater rice during submergence (By similarity).</text>
</comment>
<comment type="subcellular location">
    <subcellularLocation>
        <location evidence="1">Secreted</location>
        <location evidence="1">Cell wall</location>
    </subcellularLocation>
    <subcellularLocation>
        <location evidence="1">Membrane</location>
        <topology evidence="1">Peripheral membrane protein</topology>
    </subcellularLocation>
</comment>
<comment type="tissue specificity">
    <text evidence="5">Expressed in roots.</text>
</comment>
<comment type="similarity">
    <text evidence="6">Belongs to the expansin family. Expansin A subfamily.</text>
</comment>
<comment type="online information" name="EXPANSIN homepage">
    <link uri="https://www.dept.psu.edu/biology/groups/expansins/index.htm"/>
</comment>